<gene>
    <name evidence="1" type="primary">addA</name>
    <name type="ordered locus">CLD_0306</name>
</gene>
<name>ADDA_CLOBK</name>
<evidence type="ECO:0000255" key="1">
    <source>
        <dbReference type="HAMAP-Rule" id="MF_01451"/>
    </source>
</evidence>
<reference key="1">
    <citation type="journal article" date="2007" name="PLoS ONE">
        <title>Analysis of the neurotoxin complex genes in Clostridium botulinum A1-A4 and B1 strains: BoNT/A3, /Ba4 and /B1 clusters are located within plasmids.</title>
        <authorList>
            <person name="Smith T.J."/>
            <person name="Hill K.K."/>
            <person name="Foley B.T."/>
            <person name="Detter J.C."/>
            <person name="Munk A.C."/>
            <person name="Bruce D.C."/>
            <person name="Doggett N.A."/>
            <person name="Smith L.A."/>
            <person name="Marks J.D."/>
            <person name="Xie G."/>
            <person name="Brettin T.S."/>
        </authorList>
    </citation>
    <scope>NUCLEOTIDE SEQUENCE [LARGE SCALE GENOMIC DNA]</scope>
    <source>
        <strain>Okra / Type B1</strain>
    </source>
</reference>
<organism>
    <name type="scientific">Clostridium botulinum (strain Okra / Type B1)</name>
    <dbReference type="NCBI Taxonomy" id="498213"/>
    <lineage>
        <taxon>Bacteria</taxon>
        <taxon>Bacillati</taxon>
        <taxon>Bacillota</taxon>
        <taxon>Clostridia</taxon>
        <taxon>Eubacteriales</taxon>
        <taxon>Clostridiaceae</taxon>
        <taxon>Clostridium</taxon>
    </lineage>
</organism>
<feature type="chain" id="PRO_0000379255" description="ATP-dependent helicase/nuclease subunit A">
    <location>
        <begin position="1"/>
        <end position="1279"/>
    </location>
</feature>
<feature type="domain" description="UvrD-like helicase ATP-binding" evidence="1">
    <location>
        <begin position="4"/>
        <end position="499"/>
    </location>
</feature>
<feature type="domain" description="UvrD-like helicase C-terminal" evidence="1">
    <location>
        <begin position="526"/>
        <end position="853"/>
    </location>
</feature>
<feature type="binding site" evidence="1">
    <location>
        <begin position="25"/>
        <end position="32"/>
    </location>
    <ligand>
        <name>ATP</name>
        <dbReference type="ChEBI" id="CHEBI:30616"/>
    </ligand>
</feature>
<proteinExistence type="inferred from homology"/>
<dbReference type="EC" id="3.1.-.-" evidence="1"/>
<dbReference type="EC" id="5.6.2.4" evidence="1"/>
<dbReference type="EMBL" id="CP000939">
    <property type="protein sequence ID" value="ACA45232.1"/>
    <property type="molecule type" value="Genomic_DNA"/>
</dbReference>
<dbReference type="RefSeq" id="WP_003399607.1">
    <property type="nucleotide sequence ID" value="NC_010516.1"/>
</dbReference>
<dbReference type="SMR" id="B1IEN0"/>
<dbReference type="KEGG" id="cbb:CLD_0306"/>
<dbReference type="HOGENOM" id="CLU_001114_3_1_9"/>
<dbReference type="Proteomes" id="UP000008541">
    <property type="component" value="Chromosome"/>
</dbReference>
<dbReference type="GO" id="GO:0005829">
    <property type="term" value="C:cytosol"/>
    <property type="evidence" value="ECO:0007669"/>
    <property type="project" value="TreeGrafter"/>
</dbReference>
<dbReference type="GO" id="GO:0033202">
    <property type="term" value="C:DNA helicase complex"/>
    <property type="evidence" value="ECO:0007669"/>
    <property type="project" value="TreeGrafter"/>
</dbReference>
<dbReference type="GO" id="GO:0043138">
    <property type="term" value="F:3'-5' DNA helicase activity"/>
    <property type="evidence" value="ECO:0007669"/>
    <property type="project" value="UniProtKB-UniRule"/>
</dbReference>
<dbReference type="GO" id="GO:0008408">
    <property type="term" value="F:3'-5' exonuclease activity"/>
    <property type="evidence" value="ECO:0007669"/>
    <property type="project" value="UniProtKB-UniRule"/>
</dbReference>
<dbReference type="GO" id="GO:0005524">
    <property type="term" value="F:ATP binding"/>
    <property type="evidence" value="ECO:0007669"/>
    <property type="project" value="UniProtKB-UniRule"/>
</dbReference>
<dbReference type="GO" id="GO:0016887">
    <property type="term" value="F:ATP hydrolysis activity"/>
    <property type="evidence" value="ECO:0007669"/>
    <property type="project" value="RHEA"/>
</dbReference>
<dbReference type="GO" id="GO:0003690">
    <property type="term" value="F:double-stranded DNA binding"/>
    <property type="evidence" value="ECO:0007669"/>
    <property type="project" value="UniProtKB-UniRule"/>
</dbReference>
<dbReference type="GO" id="GO:0000724">
    <property type="term" value="P:double-strand break repair via homologous recombination"/>
    <property type="evidence" value="ECO:0007669"/>
    <property type="project" value="UniProtKB-UniRule"/>
</dbReference>
<dbReference type="FunFam" id="3.40.50.300:FF:001164">
    <property type="entry name" value="ATP-dependent helicase/nuclease subunit A"/>
    <property type="match status" value="1"/>
</dbReference>
<dbReference type="FunFam" id="3.40.50.300:FF:001196">
    <property type="entry name" value="ATP-dependent helicase/nuclease subunit A"/>
    <property type="match status" value="1"/>
</dbReference>
<dbReference type="FunFam" id="3.40.50.300:FF:001236">
    <property type="entry name" value="ATP-dependent helicase/nuclease subunit A"/>
    <property type="match status" value="1"/>
</dbReference>
<dbReference type="Gene3D" id="3.90.320.10">
    <property type="match status" value="1"/>
</dbReference>
<dbReference type="Gene3D" id="3.40.50.300">
    <property type="entry name" value="P-loop containing nucleotide triphosphate hydrolases"/>
    <property type="match status" value="4"/>
</dbReference>
<dbReference type="HAMAP" id="MF_01451">
    <property type="entry name" value="AddA"/>
    <property type="match status" value="1"/>
</dbReference>
<dbReference type="InterPro" id="IPR014152">
    <property type="entry name" value="AddA"/>
</dbReference>
<dbReference type="InterPro" id="IPR014017">
    <property type="entry name" value="DNA_helicase_UvrD-like_C"/>
</dbReference>
<dbReference type="InterPro" id="IPR000212">
    <property type="entry name" value="DNA_helicase_UvrD/REP"/>
</dbReference>
<dbReference type="InterPro" id="IPR027417">
    <property type="entry name" value="P-loop_NTPase"/>
</dbReference>
<dbReference type="InterPro" id="IPR011604">
    <property type="entry name" value="PDDEXK-like_dom_sf"/>
</dbReference>
<dbReference type="InterPro" id="IPR038726">
    <property type="entry name" value="PDDEXK_AddAB-type"/>
</dbReference>
<dbReference type="InterPro" id="IPR011335">
    <property type="entry name" value="Restrct_endonuc-II-like"/>
</dbReference>
<dbReference type="InterPro" id="IPR014016">
    <property type="entry name" value="UvrD-like_ATP-bd"/>
</dbReference>
<dbReference type="NCBIfam" id="TIGR02785">
    <property type="entry name" value="addA_Gpos"/>
    <property type="match status" value="1"/>
</dbReference>
<dbReference type="PANTHER" id="PTHR11070:SF48">
    <property type="entry name" value="ATP-DEPENDENT HELICASE_NUCLEASE SUBUNIT A"/>
    <property type="match status" value="1"/>
</dbReference>
<dbReference type="PANTHER" id="PTHR11070">
    <property type="entry name" value="UVRD / RECB / PCRA DNA HELICASE FAMILY MEMBER"/>
    <property type="match status" value="1"/>
</dbReference>
<dbReference type="Pfam" id="PF12705">
    <property type="entry name" value="PDDEXK_1"/>
    <property type="match status" value="1"/>
</dbReference>
<dbReference type="Pfam" id="PF00580">
    <property type="entry name" value="UvrD-helicase"/>
    <property type="match status" value="1"/>
</dbReference>
<dbReference type="Pfam" id="PF13361">
    <property type="entry name" value="UvrD_C"/>
    <property type="match status" value="1"/>
</dbReference>
<dbReference type="SUPFAM" id="SSF52540">
    <property type="entry name" value="P-loop containing nucleoside triphosphate hydrolases"/>
    <property type="match status" value="1"/>
</dbReference>
<dbReference type="SUPFAM" id="SSF52980">
    <property type="entry name" value="Restriction endonuclease-like"/>
    <property type="match status" value="1"/>
</dbReference>
<dbReference type="PROSITE" id="PS51198">
    <property type="entry name" value="UVRD_HELICASE_ATP_BIND"/>
    <property type="match status" value="1"/>
</dbReference>
<dbReference type="PROSITE" id="PS51217">
    <property type="entry name" value="UVRD_HELICASE_CTER"/>
    <property type="match status" value="1"/>
</dbReference>
<comment type="function">
    <text evidence="1">The heterodimer acts as both an ATP-dependent DNA helicase and an ATP-dependent, dual-direction single-stranded exonuclease. Recognizes the chi site generating a DNA molecule suitable for the initiation of homologous recombination. The AddA nuclease domain is required for chi fragment generation; this subunit has the helicase and 3' -&gt; 5' nuclease activities.</text>
</comment>
<comment type="catalytic activity">
    <reaction evidence="1">
        <text>Couples ATP hydrolysis with the unwinding of duplex DNA by translocating in the 3'-5' direction.</text>
        <dbReference type="EC" id="5.6.2.4"/>
    </reaction>
</comment>
<comment type="catalytic activity">
    <reaction evidence="1">
        <text>ATP + H2O = ADP + phosphate + H(+)</text>
        <dbReference type="Rhea" id="RHEA:13065"/>
        <dbReference type="ChEBI" id="CHEBI:15377"/>
        <dbReference type="ChEBI" id="CHEBI:15378"/>
        <dbReference type="ChEBI" id="CHEBI:30616"/>
        <dbReference type="ChEBI" id="CHEBI:43474"/>
        <dbReference type="ChEBI" id="CHEBI:456216"/>
        <dbReference type="EC" id="5.6.2.4"/>
    </reaction>
</comment>
<comment type="cofactor">
    <cofactor evidence="1">
        <name>Mg(2+)</name>
        <dbReference type="ChEBI" id="CHEBI:18420"/>
    </cofactor>
</comment>
<comment type="subunit">
    <text evidence="1">Heterodimer of AddA and AddB/RexB.</text>
</comment>
<comment type="similarity">
    <text evidence="1">Belongs to the helicase family. AddA subfamily.</text>
</comment>
<accession>B1IEN0</accession>
<protein>
    <recommendedName>
        <fullName evidence="1">ATP-dependent helicase/nuclease subunit A</fullName>
        <ecNumber evidence="1">3.1.-.-</ecNumber>
        <ecNumber evidence="1">5.6.2.4</ecNumber>
    </recommendedName>
    <alternativeName>
        <fullName evidence="1">ATP-dependent helicase/nuclease AddA</fullName>
    </alternativeName>
    <alternativeName>
        <fullName evidence="1">DNA 3'-5' helicase AddA</fullName>
    </alternativeName>
</protein>
<sequence length="1279" mass="150177">MSGTKWTDEQRQAIFTKNCNLLVAAGAGAGKTAVLVQRIIEKILDKEEPIDIDKLLVVTFTNAAAAEMRERIGDAISKGLDEDPESKVLRKQLTLLNKSNIMTIHSFCLQVIKNNFHTMEIDPNFRICDETEGILMKQEAIDELFDELYEIENEDFINLVESYASRKDTRLQEVVLELHRFAKSAPFPYTWLLNMAEGFNVGENFNFEETLWADMIMEDMKVLLYGFKNMLQQSIDVILNSEGIDYYYEPFKMDLSFINSLLEKSSFKEFRGEIIAYDFPKLPLKRNKDADKEAKERVKKLRDKVKKKIVELKNILDSYENEFIKKEFIFLYPSMKALSNLVILFDKKYEAKKRERDLIDFNDIEHLCLSILTDKNSDGHIIPSDIALNYRKKFAEVLIDEYQDSNLVQEVIMSMVSRVKGYWSFYNGQLIFNEKEINLEEPQIGLDIPNRFMVGDVKQSIYRFRQAKPEIFLDKYNEYNEEEDRKNRKVKLFKNFRSREEVINGVNYLFKQIMSKTIGELDYTEEEALKVGASYGEEVKGEPIELCLMDKKYEISEEVLKEYNVDEEEALDNIQLEGRLVAKKIQKLVGNNLEGGLKVFDKKLGEYRNLQYRDIVILMRATSNWAPVFVEELAKEGIPVFADTNSGYFDTAEIKTMISLLQIIDNPLQDIPLLSVLRSPIASFTDDELIDIRMVNKNITFYECMEIIYRLYKNEKLDSYYSFYIEDENKINKIIKDMNEKLKNKICSFIEKLKLWREKSIHIDIDEFIWFLYVETGYYGYAGALQAGEQRQANLRILFQRAKQYAKTSYKGLFNFINFINKLKFSSGDMGSAKILGENENVVRIMSIHKSKGLEFPVVILSGTGKNFNMTDLNKNILFHRDLGYGPDYVDTERRIAYPSLVKNIIKNKIRLETLSEEMRILYVALTRAREKLIITGLINNMDKTVEDWLNLSEDKNKVPEYAVMSGKTYLDWIGPALIKHKDAVSFREELKMTSELSNIVDDKSKWKIELWNKRELLKEKVEEDEVEISEKIKETLMSLEESNYKEEIYKRLSFKYKYDNASSIPTKLSVSDVKKQFILDEKENTEELFKKLELRKPMFMEEKKKISPSERGTIIHLFMQHLDLKKAENEEDIKEQINRLIEREFITYEQSKVISPYKILKFCRGELGKRILNSNNVNKEMPFSIEIPALEIYKELDKEIYKNEKLIIQGVIDCYFEEEDGLVLLDYKTDYVNDIEEIKNRYEIQIKYYEEALNRITGKNVKDKYLYLFSVDNYIKID</sequence>
<keyword id="KW-0067">ATP-binding</keyword>
<keyword id="KW-0227">DNA damage</keyword>
<keyword id="KW-0234">DNA repair</keyword>
<keyword id="KW-0238">DNA-binding</keyword>
<keyword id="KW-0269">Exonuclease</keyword>
<keyword id="KW-0347">Helicase</keyword>
<keyword id="KW-0378">Hydrolase</keyword>
<keyword id="KW-0413">Isomerase</keyword>
<keyword id="KW-0540">Nuclease</keyword>
<keyword id="KW-0547">Nucleotide-binding</keyword>